<comment type="function">
    <text evidence="1">Polynucleotide 5'-kinase involved in rRNA processing.</text>
</comment>
<comment type="subcellular location">
    <subcellularLocation>
        <location evidence="1">Nucleus</location>
        <location evidence="1">Nucleolus</location>
    </subcellularLocation>
</comment>
<comment type="similarity">
    <text evidence="4">Belongs to the Clp1 family. NOL9/GRC3 subfamily.</text>
</comment>
<keyword id="KW-0067">ATP-binding</keyword>
<keyword id="KW-0418">Kinase</keyword>
<keyword id="KW-0547">Nucleotide-binding</keyword>
<keyword id="KW-0539">Nucleus</keyword>
<keyword id="KW-1185">Reference proteome</keyword>
<keyword id="KW-0698">rRNA processing</keyword>
<keyword id="KW-0808">Transferase</keyword>
<proteinExistence type="inferred from homology"/>
<feature type="chain" id="PRO_0000087596" description="Polynucleotide 5'-hydroxyl-kinase GRC3">
    <location>
        <begin position="1"/>
        <end position="599"/>
    </location>
</feature>
<feature type="region of interest" description="Disordered" evidence="3">
    <location>
        <begin position="1"/>
        <end position="24"/>
    </location>
</feature>
<feature type="binding site" evidence="2">
    <location>
        <begin position="254"/>
        <end position="261"/>
    </location>
    <ligand>
        <name>ATP</name>
        <dbReference type="ChEBI" id="CHEBI:30616"/>
    </ligand>
</feature>
<protein>
    <recommendedName>
        <fullName>Polynucleotide 5'-hydroxyl-kinase GRC3</fullName>
        <ecNumber>2.7.1.-</ecNumber>
    </recommendedName>
</protein>
<sequence length="599" mass="64810">MTKRKSALSALKPTKKQVISSEDSDPEVVVVTNPPLDSPDAEESFISITEEDEAVRQLSTFDFSAKNTKVVRDETRGRSRVFHGMKFKETIVLRGAYVVTVWSGVIHINGALVNINSPVDIPVFAPASHALPQIEAAAGAPETRESGDEDVMEALHQLEGSSVIVEIAAMPRRSENPLITVSNFGKMSSGNIVPFVRQLWHCSEDDGSNYSRIYNTASVVTKSQAAVIPGIYDEWAEVCDDIRRLKHSSTMVVGSQNTGKSTFCKYLSAFMTTKKTGTSVAFVDLDPSNCEFTAPGQVSVTVIGAGHLSPYSILGPSFTHVTAPTYSRFVGYNNPKDDTRGYIEACKAVIDFAKGLKLPLVFNTCGWVRAAGHDLLRQLIDHVKPSDVVFTRDPGVDADQARLAESVKARSHVLDAPDAEPPRFTGAEQHSLQTVTYLHGGNLASHLSDLPALEVGLESVYVGILDSEGVDLADVALSTNSTLLAVMTMDKKTVKHAEITPDGLQYLPNFDIPQGECLGQAMVQFAGASVRLHTPVSASLLNAQLAADKAIVLVRGRIPLPVYELWDSRKGGEQAYVSFDVNSGVGSEAWVARRGLKRK</sequence>
<name>GRC3_YARLI</name>
<accession>Q6C5P9</accession>
<evidence type="ECO:0000250" key="1"/>
<evidence type="ECO:0000255" key="2"/>
<evidence type="ECO:0000256" key="3">
    <source>
        <dbReference type="SAM" id="MobiDB-lite"/>
    </source>
</evidence>
<evidence type="ECO:0000305" key="4"/>
<reference key="1">
    <citation type="journal article" date="2004" name="Nature">
        <title>Genome evolution in yeasts.</title>
        <authorList>
            <person name="Dujon B."/>
            <person name="Sherman D."/>
            <person name="Fischer G."/>
            <person name="Durrens P."/>
            <person name="Casaregola S."/>
            <person name="Lafontaine I."/>
            <person name="de Montigny J."/>
            <person name="Marck C."/>
            <person name="Neuveglise C."/>
            <person name="Talla E."/>
            <person name="Goffard N."/>
            <person name="Frangeul L."/>
            <person name="Aigle M."/>
            <person name="Anthouard V."/>
            <person name="Babour A."/>
            <person name="Barbe V."/>
            <person name="Barnay S."/>
            <person name="Blanchin S."/>
            <person name="Beckerich J.-M."/>
            <person name="Beyne E."/>
            <person name="Bleykasten C."/>
            <person name="Boisrame A."/>
            <person name="Boyer J."/>
            <person name="Cattolico L."/>
            <person name="Confanioleri F."/>
            <person name="de Daruvar A."/>
            <person name="Despons L."/>
            <person name="Fabre E."/>
            <person name="Fairhead C."/>
            <person name="Ferry-Dumazet H."/>
            <person name="Groppi A."/>
            <person name="Hantraye F."/>
            <person name="Hennequin C."/>
            <person name="Jauniaux N."/>
            <person name="Joyet P."/>
            <person name="Kachouri R."/>
            <person name="Kerrest A."/>
            <person name="Koszul R."/>
            <person name="Lemaire M."/>
            <person name="Lesur I."/>
            <person name="Ma L."/>
            <person name="Muller H."/>
            <person name="Nicaud J.-M."/>
            <person name="Nikolski M."/>
            <person name="Oztas S."/>
            <person name="Ozier-Kalogeropoulos O."/>
            <person name="Pellenz S."/>
            <person name="Potier S."/>
            <person name="Richard G.-F."/>
            <person name="Straub M.-L."/>
            <person name="Suleau A."/>
            <person name="Swennen D."/>
            <person name="Tekaia F."/>
            <person name="Wesolowski-Louvel M."/>
            <person name="Westhof E."/>
            <person name="Wirth B."/>
            <person name="Zeniou-Meyer M."/>
            <person name="Zivanovic Y."/>
            <person name="Bolotin-Fukuhara M."/>
            <person name="Thierry A."/>
            <person name="Bouchier C."/>
            <person name="Caudron B."/>
            <person name="Scarpelli C."/>
            <person name="Gaillardin C."/>
            <person name="Weissenbach J."/>
            <person name="Wincker P."/>
            <person name="Souciet J.-L."/>
        </authorList>
    </citation>
    <scope>NUCLEOTIDE SEQUENCE [LARGE SCALE GENOMIC DNA]</scope>
    <source>
        <strain>CLIB 122 / E 150</strain>
    </source>
</reference>
<dbReference type="EC" id="2.7.1.-"/>
<dbReference type="EMBL" id="CR382131">
    <property type="protein sequence ID" value="CAG79606.1"/>
    <property type="molecule type" value="Genomic_DNA"/>
</dbReference>
<dbReference type="RefSeq" id="XP_504013.1">
    <property type="nucleotide sequence ID" value="XM_504013.1"/>
</dbReference>
<dbReference type="SMR" id="Q6C5P9"/>
<dbReference type="FunCoup" id="Q6C5P9">
    <property type="interactions" value="144"/>
</dbReference>
<dbReference type="STRING" id="284591.Q6C5P9"/>
<dbReference type="EnsemblFungi" id="CAG79606">
    <property type="protein sequence ID" value="CAG79606"/>
    <property type="gene ID" value="YALI0_E16258g"/>
</dbReference>
<dbReference type="KEGG" id="yli:2911583"/>
<dbReference type="VEuPathDB" id="FungiDB:YALI0_E16258g"/>
<dbReference type="HOGENOM" id="CLU_010345_1_2_1"/>
<dbReference type="InParanoid" id="Q6C5P9"/>
<dbReference type="OMA" id="ICAIVEV"/>
<dbReference type="OrthoDB" id="85273at4891"/>
<dbReference type="Proteomes" id="UP000001300">
    <property type="component" value="Chromosome E"/>
</dbReference>
<dbReference type="GO" id="GO:0005730">
    <property type="term" value="C:nucleolus"/>
    <property type="evidence" value="ECO:0007669"/>
    <property type="project" value="UniProtKB-SubCell"/>
</dbReference>
<dbReference type="GO" id="GO:0005634">
    <property type="term" value="C:nucleus"/>
    <property type="evidence" value="ECO:0000318"/>
    <property type="project" value="GO_Central"/>
</dbReference>
<dbReference type="GO" id="GO:0005524">
    <property type="term" value="F:ATP binding"/>
    <property type="evidence" value="ECO:0007669"/>
    <property type="project" value="UniProtKB-KW"/>
</dbReference>
<dbReference type="GO" id="GO:0051731">
    <property type="term" value="F:polynucleotide 5'-hydroxyl-kinase activity"/>
    <property type="evidence" value="ECO:0000250"/>
    <property type="project" value="UniProtKB"/>
</dbReference>
<dbReference type="GO" id="GO:0000448">
    <property type="term" value="P:cleavage in ITS2 between 5.8S rRNA and LSU-rRNA of tricistronic rRNA transcript (SSU-rRNA, 5.8S rRNA, LSU-rRNA)"/>
    <property type="evidence" value="ECO:0000318"/>
    <property type="project" value="GO_Central"/>
</dbReference>
<dbReference type="GO" id="GO:0006364">
    <property type="term" value="P:rRNA processing"/>
    <property type="evidence" value="ECO:0000250"/>
    <property type="project" value="UniProtKB"/>
</dbReference>
<dbReference type="Gene3D" id="3.40.50.300">
    <property type="entry name" value="P-loop containing nucleotide triphosphate hydrolases"/>
    <property type="match status" value="1"/>
</dbReference>
<dbReference type="InterPro" id="IPR045116">
    <property type="entry name" value="Clp1/Grc3"/>
</dbReference>
<dbReference type="InterPro" id="IPR032319">
    <property type="entry name" value="CLP1_P"/>
</dbReference>
<dbReference type="InterPro" id="IPR027417">
    <property type="entry name" value="P-loop_NTPase"/>
</dbReference>
<dbReference type="PANTHER" id="PTHR12755">
    <property type="entry name" value="CLEAVAGE/POLYADENYLATION FACTOR IA SUBUNIT CLP1P"/>
    <property type="match status" value="1"/>
</dbReference>
<dbReference type="PANTHER" id="PTHR12755:SF3">
    <property type="entry name" value="POLYNUCLEOTIDE 5'-HYDROXYL-KINASE NOL9"/>
    <property type="match status" value="1"/>
</dbReference>
<dbReference type="Pfam" id="PF16575">
    <property type="entry name" value="CLP1_P"/>
    <property type="match status" value="1"/>
</dbReference>
<dbReference type="SUPFAM" id="SSF52540">
    <property type="entry name" value="P-loop containing nucleoside triphosphate hydrolases"/>
    <property type="match status" value="1"/>
</dbReference>
<organism>
    <name type="scientific">Yarrowia lipolytica (strain CLIB 122 / E 150)</name>
    <name type="common">Yeast</name>
    <name type="synonym">Candida lipolytica</name>
    <dbReference type="NCBI Taxonomy" id="284591"/>
    <lineage>
        <taxon>Eukaryota</taxon>
        <taxon>Fungi</taxon>
        <taxon>Dikarya</taxon>
        <taxon>Ascomycota</taxon>
        <taxon>Saccharomycotina</taxon>
        <taxon>Dipodascomycetes</taxon>
        <taxon>Dipodascales</taxon>
        <taxon>Dipodascales incertae sedis</taxon>
        <taxon>Yarrowia</taxon>
    </lineage>
</organism>
<gene>
    <name type="primary">GRC3</name>
    <name type="ordered locus">YALI0E16258g</name>
</gene>